<name>PLSX_STRZJ</name>
<protein>
    <recommendedName>
        <fullName evidence="1">Phosphate acyltransferase</fullName>
        <ecNumber evidence="1">2.3.1.274</ecNumber>
    </recommendedName>
    <alternativeName>
        <fullName evidence="1">Acyl-ACP phosphotransacylase</fullName>
    </alternativeName>
    <alternativeName>
        <fullName evidence="1">Acyl-[acyl-carrier-protein]--phosphate acyltransferase</fullName>
    </alternativeName>
    <alternativeName>
        <fullName evidence="1">Phosphate-acyl-ACP acyltransferase</fullName>
    </alternativeName>
</protein>
<reference key="1">
    <citation type="journal article" date="2010" name="Genome Biol.">
        <title>Structure and dynamics of the pan-genome of Streptococcus pneumoniae and closely related species.</title>
        <authorList>
            <person name="Donati C."/>
            <person name="Hiller N.L."/>
            <person name="Tettelin H."/>
            <person name="Muzzi A."/>
            <person name="Croucher N.J."/>
            <person name="Angiuoli S.V."/>
            <person name="Oggioni M."/>
            <person name="Dunning Hotopp J.C."/>
            <person name="Hu F.Z."/>
            <person name="Riley D.R."/>
            <person name="Covacci A."/>
            <person name="Mitchell T.J."/>
            <person name="Bentley S.D."/>
            <person name="Kilian M."/>
            <person name="Ehrlich G.D."/>
            <person name="Rappuoli R."/>
            <person name="Moxon E.R."/>
            <person name="Masignani V."/>
        </authorList>
    </citation>
    <scope>NUCLEOTIDE SEQUENCE [LARGE SCALE GENOMIC DNA]</scope>
    <source>
        <strain>JJA</strain>
    </source>
</reference>
<accession>C1CHD4</accession>
<feature type="chain" id="PRO_1000193149" description="Phosphate acyltransferase">
    <location>
        <begin position="1"/>
        <end position="330"/>
    </location>
</feature>
<dbReference type="EC" id="2.3.1.274" evidence="1"/>
<dbReference type="EMBL" id="CP000919">
    <property type="protein sequence ID" value="ACO19529.1"/>
    <property type="molecule type" value="Genomic_DNA"/>
</dbReference>
<dbReference type="RefSeq" id="WP_000717458.1">
    <property type="nucleotide sequence ID" value="NC_012466.1"/>
</dbReference>
<dbReference type="SMR" id="C1CHD4"/>
<dbReference type="KEGG" id="sjj:SPJ_0061"/>
<dbReference type="HOGENOM" id="CLU_039379_1_1_9"/>
<dbReference type="UniPathway" id="UPA00085"/>
<dbReference type="Proteomes" id="UP000002206">
    <property type="component" value="Chromosome"/>
</dbReference>
<dbReference type="GO" id="GO:0005737">
    <property type="term" value="C:cytoplasm"/>
    <property type="evidence" value="ECO:0007669"/>
    <property type="project" value="UniProtKB-SubCell"/>
</dbReference>
<dbReference type="GO" id="GO:0043811">
    <property type="term" value="F:phosphate:acyl-[acyl carrier protein] acyltransferase activity"/>
    <property type="evidence" value="ECO:0007669"/>
    <property type="project" value="UniProtKB-UniRule"/>
</dbReference>
<dbReference type="GO" id="GO:0006633">
    <property type="term" value="P:fatty acid biosynthetic process"/>
    <property type="evidence" value="ECO:0007669"/>
    <property type="project" value="UniProtKB-UniRule"/>
</dbReference>
<dbReference type="GO" id="GO:0008654">
    <property type="term" value="P:phospholipid biosynthetic process"/>
    <property type="evidence" value="ECO:0007669"/>
    <property type="project" value="UniProtKB-KW"/>
</dbReference>
<dbReference type="Gene3D" id="3.40.718.10">
    <property type="entry name" value="Isopropylmalate Dehydrogenase"/>
    <property type="match status" value="1"/>
</dbReference>
<dbReference type="HAMAP" id="MF_00019">
    <property type="entry name" value="PlsX"/>
    <property type="match status" value="1"/>
</dbReference>
<dbReference type="InterPro" id="IPR003664">
    <property type="entry name" value="FA_synthesis"/>
</dbReference>
<dbReference type="InterPro" id="IPR012281">
    <property type="entry name" value="Phospholipid_synth_PlsX-like"/>
</dbReference>
<dbReference type="NCBIfam" id="TIGR00182">
    <property type="entry name" value="plsX"/>
    <property type="match status" value="1"/>
</dbReference>
<dbReference type="PANTHER" id="PTHR30100">
    <property type="entry name" value="FATTY ACID/PHOSPHOLIPID SYNTHESIS PROTEIN PLSX"/>
    <property type="match status" value="1"/>
</dbReference>
<dbReference type="PANTHER" id="PTHR30100:SF1">
    <property type="entry name" value="PHOSPHATE ACYLTRANSFERASE"/>
    <property type="match status" value="1"/>
</dbReference>
<dbReference type="Pfam" id="PF02504">
    <property type="entry name" value="FA_synthesis"/>
    <property type="match status" value="1"/>
</dbReference>
<dbReference type="PIRSF" id="PIRSF002465">
    <property type="entry name" value="Phsphlp_syn_PlsX"/>
    <property type="match status" value="1"/>
</dbReference>
<dbReference type="SUPFAM" id="SSF53659">
    <property type="entry name" value="Isocitrate/Isopropylmalate dehydrogenase-like"/>
    <property type="match status" value="1"/>
</dbReference>
<gene>
    <name evidence="1" type="primary">plsX</name>
    <name type="ordered locus">SPJ_0061</name>
</gene>
<keyword id="KW-0963">Cytoplasm</keyword>
<keyword id="KW-0444">Lipid biosynthesis</keyword>
<keyword id="KW-0443">Lipid metabolism</keyword>
<keyword id="KW-0594">Phospholipid biosynthesis</keyword>
<keyword id="KW-1208">Phospholipid metabolism</keyword>
<keyword id="KW-0808">Transferase</keyword>
<sequence>MKKIAVDAMGGDYAPQAIVEGVNQALSDFSDIEVQLYGDEAKIKQYLTATERVSIIHTDEKIDSDDEPTRAIRNKKNASMVLAAKAVKDGEADAVLSAGNTGALLAAGFFIVGRIKNIDRPGLMSTLPTVDGKGFDMLDLGANAENTAQHLHQYAVLGSFYAKNVRGIAQPRVGLLNNGTESSKGDPLRKETYELLAADESLNFIGNVEARDLMNGVADVVVADGFTGNAVLKSIEGTAMGIMGLLKTAITGGGLRAKLGALLLKDSLSGLKKQLNYSDVGGAVLFGVKAPVVKTHGSSDAKAVYSTIRQIRTMLETDVVAQTAREFSGE</sequence>
<proteinExistence type="inferred from homology"/>
<evidence type="ECO:0000255" key="1">
    <source>
        <dbReference type="HAMAP-Rule" id="MF_00019"/>
    </source>
</evidence>
<organism>
    <name type="scientific">Streptococcus pneumoniae (strain JJA)</name>
    <dbReference type="NCBI Taxonomy" id="488222"/>
    <lineage>
        <taxon>Bacteria</taxon>
        <taxon>Bacillati</taxon>
        <taxon>Bacillota</taxon>
        <taxon>Bacilli</taxon>
        <taxon>Lactobacillales</taxon>
        <taxon>Streptococcaceae</taxon>
        <taxon>Streptococcus</taxon>
    </lineage>
</organism>
<comment type="function">
    <text evidence="1">Catalyzes the reversible formation of acyl-phosphate (acyl-PO(4)) from acyl-[acyl-carrier-protein] (acyl-ACP). This enzyme utilizes acyl-ACP as fatty acyl donor, but not acyl-CoA.</text>
</comment>
<comment type="catalytic activity">
    <reaction evidence="1">
        <text>a fatty acyl-[ACP] + phosphate = an acyl phosphate + holo-[ACP]</text>
        <dbReference type="Rhea" id="RHEA:42292"/>
        <dbReference type="Rhea" id="RHEA-COMP:9685"/>
        <dbReference type="Rhea" id="RHEA-COMP:14125"/>
        <dbReference type="ChEBI" id="CHEBI:43474"/>
        <dbReference type="ChEBI" id="CHEBI:59918"/>
        <dbReference type="ChEBI" id="CHEBI:64479"/>
        <dbReference type="ChEBI" id="CHEBI:138651"/>
        <dbReference type="EC" id="2.3.1.274"/>
    </reaction>
</comment>
<comment type="pathway">
    <text evidence="1">Lipid metabolism; phospholipid metabolism.</text>
</comment>
<comment type="subunit">
    <text evidence="1">Homodimer. Probably interacts with PlsY.</text>
</comment>
<comment type="subcellular location">
    <subcellularLocation>
        <location evidence="1">Cytoplasm</location>
    </subcellularLocation>
    <text evidence="1">Associated with the membrane possibly through PlsY.</text>
</comment>
<comment type="similarity">
    <text evidence="1">Belongs to the PlsX family.</text>
</comment>